<reference key="1">
    <citation type="journal article" date="1997" name="Int. J. Syst. Bacteriol.">
        <title>Phylogenetic analysis of mycoplasmas based on Hsp70 sequences: cloning of the dnaK (hsp70) gene region of Mycoplasma capricolum.</title>
        <authorList>
            <person name="Falah M."/>
            <person name="Gupta R.S."/>
        </authorList>
    </citation>
    <scope>NUCLEOTIDE SEQUENCE [GENOMIC DNA]</scope>
</reference>
<reference key="2">
    <citation type="submission" date="2005-09" db="EMBL/GenBank/DDBJ databases">
        <authorList>
            <person name="Glass J.I."/>
            <person name="Lartigue C."/>
            <person name="Pfannkoch C."/>
            <person name="Baden-Tillson H."/>
            <person name="Smith H.O."/>
            <person name="Venter J.C."/>
            <person name="Roske K."/>
            <person name="Wise K.S."/>
            <person name="Calcutt M.J."/>
            <person name="Nelson W.C."/>
            <person name="Nierman W.C."/>
        </authorList>
    </citation>
    <scope>NUCLEOTIDE SEQUENCE [LARGE SCALE GENOMIC DNA]</scope>
    <source>
        <strain>California kid / ATCC 27343 / NCTC 10154</strain>
    </source>
</reference>
<comment type="function">
    <text evidence="1">Negative regulator of class I heat shock genes (grpE-dnaK-dnaJ and groELS operons). Prevents heat-shock induction of these operons.</text>
</comment>
<comment type="similarity">
    <text evidence="1">Belongs to the HrcA family.</text>
</comment>
<organism>
    <name type="scientific">Mycoplasma capricolum subsp. capricolum (strain California kid / ATCC 27343 / NCTC 10154)</name>
    <dbReference type="NCBI Taxonomy" id="340047"/>
    <lineage>
        <taxon>Bacteria</taxon>
        <taxon>Bacillati</taxon>
        <taxon>Mycoplasmatota</taxon>
        <taxon>Mollicutes</taxon>
        <taxon>Mycoplasmataceae</taxon>
        <taxon>Mycoplasma</taxon>
    </lineage>
</organism>
<gene>
    <name evidence="1" type="primary">hrcA</name>
    <name type="ordered locus">MCAP_0367</name>
</gene>
<name>HRCA_MYCCT</name>
<evidence type="ECO:0000255" key="1">
    <source>
        <dbReference type="HAMAP-Rule" id="MF_00081"/>
    </source>
</evidence>
<evidence type="ECO:0000305" key="2"/>
<keyword id="KW-0678">Repressor</keyword>
<keyword id="KW-0346">Stress response</keyword>
<keyword id="KW-0804">Transcription</keyword>
<keyword id="KW-0805">Transcription regulation</keyword>
<dbReference type="EMBL" id="U51235">
    <property type="protein sequence ID" value="AAB09428.1"/>
    <property type="molecule type" value="Genomic_DNA"/>
</dbReference>
<dbReference type="EMBL" id="CP000123">
    <property type="protein sequence ID" value="ABC01793.1"/>
    <property type="molecule type" value="Genomic_DNA"/>
</dbReference>
<dbReference type="RefSeq" id="WP_011387252.1">
    <property type="nucleotide sequence ID" value="NC_007633.1"/>
</dbReference>
<dbReference type="SMR" id="P71498"/>
<dbReference type="GeneID" id="23778677"/>
<dbReference type="KEGG" id="mcp:MCAP_0367"/>
<dbReference type="HOGENOM" id="CLU_050019_1_0_14"/>
<dbReference type="PhylomeDB" id="P71498"/>
<dbReference type="Proteomes" id="UP000001928">
    <property type="component" value="Chromosome"/>
</dbReference>
<dbReference type="GO" id="GO:0003677">
    <property type="term" value="F:DNA binding"/>
    <property type="evidence" value="ECO:0007669"/>
    <property type="project" value="InterPro"/>
</dbReference>
<dbReference type="GO" id="GO:0045892">
    <property type="term" value="P:negative regulation of DNA-templated transcription"/>
    <property type="evidence" value="ECO:0007669"/>
    <property type="project" value="UniProtKB-UniRule"/>
</dbReference>
<dbReference type="Gene3D" id="3.30.450.40">
    <property type="match status" value="1"/>
</dbReference>
<dbReference type="Gene3D" id="3.30.390.60">
    <property type="entry name" value="Heat-inducible transcription repressor hrca homolog, domain 3"/>
    <property type="match status" value="1"/>
</dbReference>
<dbReference type="Gene3D" id="1.10.10.10">
    <property type="entry name" value="Winged helix-like DNA-binding domain superfamily/Winged helix DNA-binding domain"/>
    <property type="match status" value="1"/>
</dbReference>
<dbReference type="HAMAP" id="MF_00081">
    <property type="entry name" value="HrcA"/>
    <property type="match status" value="1"/>
</dbReference>
<dbReference type="InterPro" id="IPR029016">
    <property type="entry name" value="GAF-like_dom_sf"/>
</dbReference>
<dbReference type="InterPro" id="IPR002571">
    <property type="entry name" value="HrcA"/>
</dbReference>
<dbReference type="InterPro" id="IPR021153">
    <property type="entry name" value="HrcA_C"/>
</dbReference>
<dbReference type="InterPro" id="IPR036388">
    <property type="entry name" value="WH-like_DNA-bd_sf"/>
</dbReference>
<dbReference type="InterPro" id="IPR036390">
    <property type="entry name" value="WH_DNA-bd_sf"/>
</dbReference>
<dbReference type="InterPro" id="IPR023120">
    <property type="entry name" value="WHTH_transcript_rep_HrcA_IDD"/>
</dbReference>
<dbReference type="NCBIfam" id="TIGR00331">
    <property type="entry name" value="hrcA"/>
    <property type="match status" value="1"/>
</dbReference>
<dbReference type="PANTHER" id="PTHR34824">
    <property type="entry name" value="HEAT-INDUCIBLE TRANSCRIPTION REPRESSOR HRCA"/>
    <property type="match status" value="1"/>
</dbReference>
<dbReference type="PANTHER" id="PTHR34824:SF1">
    <property type="entry name" value="HEAT-INDUCIBLE TRANSCRIPTION REPRESSOR HRCA"/>
    <property type="match status" value="1"/>
</dbReference>
<dbReference type="Pfam" id="PF01628">
    <property type="entry name" value="HrcA"/>
    <property type="match status" value="1"/>
</dbReference>
<dbReference type="PIRSF" id="PIRSF005485">
    <property type="entry name" value="HrcA"/>
    <property type="match status" value="1"/>
</dbReference>
<dbReference type="SUPFAM" id="SSF55781">
    <property type="entry name" value="GAF domain-like"/>
    <property type="match status" value="1"/>
</dbReference>
<dbReference type="SUPFAM" id="SSF46785">
    <property type="entry name" value="Winged helix' DNA-binding domain"/>
    <property type="match status" value="1"/>
</dbReference>
<feature type="chain" id="PRO_0000182501" description="Heat-inducible transcription repressor HrcA">
    <location>
        <begin position="1"/>
        <end position="340"/>
    </location>
</feature>
<feature type="sequence conflict" description="In Ref. 1; AAB09428." evidence="2" ref="1">
    <original>KQ</original>
    <variation>SK</variation>
    <location>
        <begin position="128"/>
        <end position="129"/>
    </location>
</feature>
<feature type="sequence conflict" description="In Ref. 1; AAB09428." evidence="2" ref="1">
    <location>
        <position position="138"/>
    </location>
</feature>
<feature type="sequence conflict" description="In Ref. 1; AAB09428." evidence="2" ref="1">
    <original>VDYNQVNQLMNLIIEIINAKEN</original>
    <variation>GRLQPSKPVNELNYWNY</variation>
    <location>
        <begin position="319"/>
        <end position="340"/>
    </location>
</feature>
<protein>
    <recommendedName>
        <fullName evidence="1">Heat-inducible transcription repressor HrcA</fullName>
    </recommendedName>
</protein>
<accession>P71498</accession>
<accession>Q2SSB2</accession>
<sequence length="340" mass="39317">MLTKRQVKILQTIVEEFIKTNQPVGSKRILELLDIKISSATIRNESAILEHEGYLEKQHTSSGRTPSTKGYRYYVDNIMKLDSADYTRLKIYLNQLLDLRKYDIDKTINYASEIISELTKMTAVVIKKQNIKNIKLKKIELILLSEFLASVLFIFSDGDVQNKMFNLKDISLSDLKIAIKLFSDFLVDVKLDEIDQYLNDLKHQLSLSIKQYDYVLNTFINTILESKNEQKETHGMRYMLENPEFNDTNKLKNAVKLVEQLSPFDWFNIAYESNKNMNKIAIKIGNEIDQINDDISMIATELKIGNSSTVLTLVGPKRVDYNQVNQLMNLIIEIINAKEN</sequence>
<proteinExistence type="inferred from homology"/>